<protein>
    <recommendedName>
        <fullName evidence="1">Protein YG5714_2147</fullName>
    </recommendedName>
</protein>
<organism>
    <name type="scientific">Saccharolobus islandicus (strain Y.G.57.14 / Yellowstone #1)</name>
    <name type="common">Sulfolobus islandicus</name>
    <dbReference type="NCBI Taxonomy" id="439386"/>
    <lineage>
        <taxon>Archaea</taxon>
        <taxon>Thermoproteota</taxon>
        <taxon>Thermoprotei</taxon>
        <taxon>Sulfolobales</taxon>
        <taxon>Sulfolobaceae</taxon>
        <taxon>Saccharolobus</taxon>
    </lineage>
</organism>
<accession>C3N8A9</accession>
<sequence>MDYWFAEIVTIGNEVLSGKTVNTNASHIGRRLTSLGFTVRRITVVMDDIDEIVSAFREAIDRKPKVIVSSGGLGPTWDDKTAEGLAKALGVNLELNKTAFDMILEKYTKRNIPLTEERKKMAYLPYGAMAVENNEGIAPGIYIYHNNIDILATPGVPREMENVLENFINKMLRNKPNLKYLEDFIYVENVMESALAPYVKELVKKYDIYIKTHPKSYELLRPILEIQIAGSGREEEIKVKIEKVKNELLDAIKKLNGIIRNSL</sequence>
<reference key="1">
    <citation type="journal article" date="2009" name="Proc. Natl. Acad. Sci. U.S.A.">
        <title>Biogeography of the Sulfolobus islandicus pan-genome.</title>
        <authorList>
            <person name="Reno M.L."/>
            <person name="Held N.L."/>
            <person name="Fields C.J."/>
            <person name="Burke P.V."/>
            <person name="Whitaker R.J."/>
        </authorList>
    </citation>
    <scope>NUCLEOTIDE SEQUENCE [LARGE SCALE GENOMIC DNA]</scope>
    <source>
        <strain>Y.G.57.14 / Yellowstone #1</strain>
    </source>
</reference>
<proteinExistence type="inferred from homology"/>
<feature type="chain" id="PRO_1000204336" description="Protein YG5714_2147">
    <location>
        <begin position="1"/>
        <end position="263"/>
    </location>
</feature>
<gene>
    <name type="ordered locus">YG5714_2147</name>
</gene>
<name>Y2147_SACI7</name>
<dbReference type="EMBL" id="CP001403">
    <property type="protein sequence ID" value="ACP46396.1"/>
    <property type="molecule type" value="Genomic_DNA"/>
</dbReference>
<dbReference type="RefSeq" id="WP_012711988.1">
    <property type="nucleotide sequence ID" value="NC_012622.1"/>
</dbReference>
<dbReference type="SMR" id="C3N8A9"/>
<dbReference type="KEGG" id="siy:YG5714_2147"/>
<dbReference type="HOGENOM" id="CLU_030805_0_5_2"/>
<dbReference type="Proteomes" id="UP000002308">
    <property type="component" value="Chromosome"/>
</dbReference>
<dbReference type="CDD" id="cd00885">
    <property type="entry name" value="cinA"/>
    <property type="match status" value="1"/>
</dbReference>
<dbReference type="Gene3D" id="3.40.980.10">
    <property type="entry name" value="MoaB/Mog-like domain"/>
    <property type="match status" value="1"/>
</dbReference>
<dbReference type="HAMAP" id="MF_00226_A">
    <property type="entry name" value="CinA_A"/>
    <property type="match status" value="1"/>
</dbReference>
<dbReference type="InterPro" id="IPR050101">
    <property type="entry name" value="CinA"/>
</dbReference>
<dbReference type="InterPro" id="IPR023055">
    <property type="entry name" value="CinA_Arc"/>
</dbReference>
<dbReference type="InterPro" id="IPR036425">
    <property type="entry name" value="MoaB/Mog-like_dom_sf"/>
</dbReference>
<dbReference type="InterPro" id="IPR001453">
    <property type="entry name" value="MoaB/Mog_dom"/>
</dbReference>
<dbReference type="NCBIfam" id="NF002291">
    <property type="entry name" value="PRK01215.1"/>
    <property type="match status" value="1"/>
</dbReference>
<dbReference type="PANTHER" id="PTHR13939">
    <property type="entry name" value="NICOTINAMIDE-NUCLEOTIDE AMIDOHYDROLASE PNCC"/>
    <property type="match status" value="1"/>
</dbReference>
<dbReference type="PANTHER" id="PTHR13939:SF0">
    <property type="entry name" value="NMN AMIDOHYDROLASE-LIKE PROTEIN YFAY"/>
    <property type="match status" value="1"/>
</dbReference>
<dbReference type="Pfam" id="PF00994">
    <property type="entry name" value="MoCF_biosynth"/>
    <property type="match status" value="1"/>
</dbReference>
<dbReference type="SMART" id="SM00852">
    <property type="entry name" value="MoCF_biosynth"/>
    <property type="match status" value="1"/>
</dbReference>
<dbReference type="SUPFAM" id="SSF53218">
    <property type="entry name" value="Molybdenum cofactor biosynthesis proteins"/>
    <property type="match status" value="1"/>
</dbReference>
<evidence type="ECO:0000255" key="1">
    <source>
        <dbReference type="HAMAP-Rule" id="MF_00226"/>
    </source>
</evidence>
<comment type="similarity">
    <text evidence="1">Belongs to the CinA family.</text>
</comment>